<keyword id="KW-0687">Ribonucleoprotein</keyword>
<keyword id="KW-0689">Ribosomal protein</keyword>
<comment type="function">
    <text evidence="1">Involved in the binding of tRNA to the ribosomes.</text>
</comment>
<comment type="subunit">
    <text evidence="1">Part of the 30S ribosomal subunit.</text>
</comment>
<comment type="similarity">
    <text evidence="1">Belongs to the universal ribosomal protein uS10 family.</text>
</comment>
<name>RS10_NITV9</name>
<accession>B8DN95</accession>
<protein>
    <recommendedName>
        <fullName evidence="1">Small ribosomal subunit protein uS10</fullName>
    </recommendedName>
    <alternativeName>
        <fullName evidence="2">30S ribosomal protein S10</fullName>
    </alternativeName>
</protein>
<gene>
    <name evidence="1" type="primary">rpsJ</name>
    <name type="ordered locus">DvMF_0078</name>
</gene>
<evidence type="ECO:0000255" key="1">
    <source>
        <dbReference type="HAMAP-Rule" id="MF_00508"/>
    </source>
</evidence>
<evidence type="ECO:0000305" key="2"/>
<proteinExistence type="inferred from homology"/>
<dbReference type="EMBL" id="CP001197">
    <property type="protein sequence ID" value="ACL07039.1"/>
    <property type="molecule type" value="Genomic_DNA"/>
</dbReference>
<dbReference type="SMR" id="B8DN95"/>
<dbReference type="STRING" id="883.DvMF_0078"/>
<dbReference type="KEGG" id="dvm:DvMF_0078"/>
<dbReference type="eggNOG" id="COG0051">
    <property type="taxonomic scope" value="Bacteria"/>
</dbReference>
<dbReference type="HOGENOM" id="CLU_122625_1_3_7"/>
<dbReference type="OrthoDB" id="9804464at2"/>
<dbReference type="GO" id="GO:1990904">
    <property type="term" value="C:ribonucleoprotein complex"/>
    <property type="evidence" value="ECO:0007669"/>
    <property type="project" value="UniProtKB-KW"/>
</dbReference>
<dbReference type="GO" id="GO:0005840">
    <property type="term" value="C:ribosome"/>
    <property type="evidence" value="ECO:0007669"/>
    <property type="project" value="UniProtKB-KW"/>
</dbReference>
<dbReference type="GO" id="GO:0003735">
    <property type="term" value="F:structural constituent of ribosome"/>
    <property type="evidence" value="ECO:0007669"/>
    <property type="project" value="InterPro"/>
</dbReference>
<dbReference type="GO" id="GO:0000049">
    <property type="term" value="F:tRNA binding"/>
    <property type="evidence" value="ECO:0007669"/>
    <property type="project" value="UniProtKB-UniRule"/>
</dbReference>
<dbReference type="GO" id="GO:0006412">
    <property type="term" value="P:translation"/>
    <property type="evidence" value="ECO:0007669"/>
    <property type="project" value="UniProtKB-UniRule"/>
</dbReference>
<dbReference type="FunFam" id="3.30.70.600:FF:000003">
    <property type="entry name" value="30S ribosomal protein S10"/>
    <property type="match status" value="1"/>
</dbReference>
<dbReference type="Gene3D" id="3.30.70.600">
    <property type="entry name" value="Ribosomal protein S10 domain"/>
    <property type="match status" value="1"/>
</dbReference>
<dbReference type="HAMAP" id="MF_00508">
    <property type="entry name" value="Ribosomal_uS10"/>
    <property type="match status" value="1"/>
</dbReference>
<dbReference type="InterPro" id="IPR001848">
    <property type="entry name" value="Ribosomal_uS10"/>
</dbReference>
<dbReference type="InterPro" id="IPR018268">
    <property type="entry name" value="Ribosomal_uS10_CS"/>
</dbReference>
<dbReference type="InterPro" id="IPR027486">
    <property type="entry name" value="Ribosomal_uS10_dom"/>
</dbReference>
<dbReference type="InterPro" id="IPR036838">
    <property type="entry name" value="Ribosomal_uS10_dom_sf"/>
</dbReference>
<dbReference type="NCBIfam" id="NF001861">
    <property type="entry name" value="PRK00596.1"/>
    <property type="match status" value="1"/>
</dbReference>
<dbReference type="NCBIfam" id="TIGR01049">
    <property type="entry name" value="rpsJ_bact"/>
    <property type="match status" value="1"/>
</dbReference>
<dbReference type="PANTHER" id="PTHR11700">
    <property type="entry name" value="30S RIBOSOMAL PROTEIN S10 FAMILY MEMBER"/>
    <property type="match status" value="1"/>
</dbReference>
<dbReference type="Pfam" id="PF00338">
    <property type="entry name" value="Ribosomal_S10"/>
    <property type="match status" value="1"/>
</dbReference>
<dbReference type="PRINTS" id="PR00971">
    <property type="entry name" value="RIBOSOMALS10"/>
</dbReference>
<dbReference type="SMART" id="SM01403">
    <property type="entry name" value="Ribosomal_S10"/>
    <property type="match status" value="1"/>
</dbReference>
<dbReference type="SUPFAM" id="SSF54999">
    <property type="entry name" value="Ribosomal protein S10"/>
    <property type="match status" value="1"/>
</dbReference>
<dbReference type="PROSITE" id="PS00361">
    <property type="entry name" value="RIBOSOMAL_S10"/>
    <property type="match status" value="1"/>
</dbReference>
<organism>
    <name type="scientific">Nitratidesulfovibrio vulgaris (strain DSM 19637 / Miyazaki F)</name>
    <name type="common">Desulfovibrio vulgaris</name>
    <dbReference type="NCBI Taxonomy" id="883"/>
    <lineage>
        <taxon>Bacteria</taxon>
        <taxon>Pseudomonadati</taxon>
        <taxon>Thermodesulfobacteriota</taxon>
        <taxon>Desulfovibrionia</taxon>
        <taxon>Desulfovibrionales</taxon>
        <taxon>Desulfovibrionaceae</taxon>
        <taxon>Nitratidesulfovibrio</taxon>
    </lineage>
</organism>
<reference key="1">
    <citation type="submission" date="2008-10" db="EMBL/GenBank/DDBJ databases">
        <title>Complete sequence of Desulfovibrio vulgaris str. 'Miyazaki F'.</title>
        <authorList>
            <person name="Lucas S."/>
            <person name="Copeland A."/>
            <person name="Lapidus A."/>
            <person name="Glavina del Rio T."/>
            <person name="Dalin E."/>
            <person name="Tice H."/>
            <person name="Bruce D."/>
            <person name="Goodwin L."/>
            <person name="Pitluck S."/>
            <person name="Sims D."/>
            <person name="Brettin T."/>
            <person name="Detter J.C."/>
            <person name="Han C."/>
            <person name="Larimer F."/>
            <person name="Land M."/>
            <person name="Hauser L."/>
            <person name="Kyrpides N."/>
            <person name="Mikhailova N."/>
            <person name="Hazen T.C."/>
            <person name="Richardson P."/>
        </authorList>
    </citation>
    <scope>NUCLEOTIDE SEQUENCE [LARGE SCALE GENOMIC DNA]</scope>
    <source>
        <strain>DSM 19637 / Miyazaki F</strain>
    </source>
</reference>
<feature type="chain" id="PRO_1000127114" description="Small ribosomal subunit protein uS10">
    <location>
        <begin position="1"/>
        <end position="105"/>
    </location>
</feature>
<sequence length="105" mass="11768">MTTVSSDRIRIKLKAYDYRILDKAVAEIVDTARNTGAGVAGPIPLPTNIHKYTVNRSVHVDKKSREQFEMRIHKRLMDILEPTQQTVDALGKLSLPAGVDVEIKL</sequence>